<dbReference type="EC" id="2.3.3.17" evidence="5"/>
<dbReference type="EMBL" id="AJ131517">
    <property type="protein sequence ID" value="CAC80102.1"/>
    <property type="molecule type" value="Genomic_DNA"/>
</dbReference>
<dbReference type="EMBL" id="AY049037">
    <property type="protein sequence ID" value="AAL10687.1"/>
    <property type="molecule type" value="mRNA"/>
</dbReference>
<dbReference type="EMBL" id="AJ486882">
    <property type="protein sequence ID" value="CAD31140.1"/>
    <property type="molecule type" value="mRNA"/>
</dbReference>
<dbReference type="EMBL" id="AJ486883">
    <property type="protein sequence ID" value="CAD31141.1"/>
    <property type="molecule type" value="mRNA"/>
</dbReference>
<dbReference type="EMBL" id="AJ486884">
    <property type="protein sequence ID" value="CAD31142.1"/>
    <property type="molecule type" value="mRNA"/>
</dbReference>
<dbReference type="EMBL" id="AJ486885">
    <property type="protein sequence ID" value="CAD31143.1"/>
    <property type="molecule type" value="mRNA"/>
</dbReference>
<dbReference type="EMBL" id="AJ486886">
    <property type="protein sequence ID" value="CAD31144.1"/>
    <property type="molecule type" value="mRNA"/>
</dbReference>
<dbReference type="EMBL" id="AJ486887">
    <property type="protein sequence ID" value="CAD31145.1"/>
    <property type="molecule type" value="mRNA"/>
</dbReference>
<dbReference type="EMBL" id="AJ486888">
    <property type="protein sequence ID" value="CAD31146.1"/>
    <property type="molecule type" value="mRNA"/>
</dbReference>
<dbReference type="EMBL" id="AM180572">
    <property type="protein sequence ID" value="CAJ55504.1"/>
    <property type="molecule type" value="Genomic_DNA"/>
</dbReference>
<dbReference type="EMBL" id="AB026660">
    <property type="protein sequence ID" value="BAB08874.1"/>
    <property type="molecule type" value="Genomic_DNA"/>
</dbReference>
<dbReference type="EMBL" id="CP002688">
    <property type="protein sequence ID" value="AED93107.1"/>
    <property type="molecule type" value="Genomic_DNA"/>
</dbReference>
<dbReference type="EMBL" id="AY054203">
    <property type="protein sequence ID" value="AAL06864.1"/>
    <property type="molecule type" value="mRNA"/>
</dbReference>
<dbReference type="EMBL" id="AY070471">
    <property type="protein sequence ID" value="AAL49937.1"/>
    <property type="molecule type" value="mRNA"/>
</dbReference>
<dbReference type="EMBL" id="AY149926">
    <property type="protein sequence ID" value="AAN31080.1"/>
    <property type="molecule type" value="mRNA"/>
</dbReference>
<dbReference type="RefSeq" id="NP_197692.1">
    <property type="nucleotide sequence ID" value="NM_122207.3"/>
</dbReference>
<dbReference type="SMR" id="Q9FG67"/>
<dbReference type="FunCoup" id="Q9FG67">
    <property type="interactions" value="451"/>
</dbReference>
<dbReference type="STRING" id="3702.Q9FG67"/>
<dbReference type="iPTMnet" id="Q9FG67"/>
<dbReference type="PaxDb" id="3702-AT5G23010.1"/>
<dbReference type="ProteomicsDB" id="238875"/>
<dbReference type="EnsemblPlants" id="AT5G23010.1">
    <property type="protein sequence ID" value="AT5G23010.1"/>
    <property type="gene ID" value="AT5G23010"/>
</dbReference>
<dbReference type="GeneID" id="832365"/>
<dbReference type="Gramene" id="AT5G23010.1">
    <property type="protein sequence ID" value="AT5G23010.1"/>
    <property type="gene ID" value="AT5G23010"/>
</dbReference>
<dbReference type="KEGG" id="ath:AT5G23010"/>
<dbReference type="Araport" id="AT5G23010"/>
<dbReference type="TAIR" id="AT5G23010">
    <property type="gene designation" value="MAM1"/>
</dbReference>
<dbReference type="eggNOG" id="KOG2367">
    <property type="taxonomic scope" value="Eukaryota"/>
</dbReference>
<dbReference type="HOGENOM" id="CLU_022158_3_1_1"/>
<dbReference type="InParanoid" id="Q9FG67"/>
<dbReference type="PhylomeDB" id="Q9FG67"/>
<dbReference type="BioCyc" id="MetaCyc:AT5G23010-MONOMER"/>
<dbReference type="BRENDA" id="2.3.3.13">
    <property type="organism ID" value="399"/>
</dbReference>
<dbReference type="BRENDA" id="2.3.3.17">
    <property type="organism ID" value="399"/>
</dbReference>
<dbReference type="PRO" id="PR:Q9FG67"/>
<dbReference type="Proteomes" id="UP000006548">
    <property type="component" value="Chromosome 5"/>
</dbReference>
<dbReference type="ExpressionAtlas" id="Q9FG67">
    <property type="expression patterns" value="baseline and differential"/>
</dbReference>
<dbReference type="GO" id="GO:0009507">
    <property type="term" value="C:chloroplast"/>
    <property type="evidence" value="ECO:0007005"/>
    <property type="project" value="TAIR"/>
</dbReference>
<dbReference type="GO" id="GO:0010177">
    <property type="term" value="F:methylthioalkylmalate synthase activity"/>
    <property type="evidence" value="ECO:0000314"/>
    <property type="project" value="TAIR"/>
</dbReference>
<dbReference type="GO" id="GO:0019752">
    <property type="term" value="P:carboxylic acid metabolic process"/>
    <property type="evidence" value="ECO:0007669"/>
    <property type="project" value="InterPro"/>
</dbReference>
<dbReference type="GO" id="GO:0019761">
    <property type="term" value="P:glucosinolate biosynthetic process"/>
    <property type="evidence" value="ECO:0000314"/>
    <property type="project" value="TAIR"/>
</dbReference>
<dbReference type="GO" id="GO:0009625">
    <property type="term" value="P:response to insect"/>
    <property type="evidence" value="ECO:0000270"/>
    <property type="project" value="TAIR"/>
</dbReference>
<dbReference type="GO" id="GO:0009414">
    <property type="term" value="P:response to water deprivation"/>
    <property type="evidence" value="ECO:0000270"/>
    <property type="project" value="TAIR"/>
</dbReference>
<dbReference type="CDD" id="cd07940">
    <property type="entry name" value="DRE_TIM_IPMS"/>
    <property type="match status" value="1"/>
</dbReference>
<dbReference type="FunFam" id="1.10.238.260:FF:000001">
    <property type="entry name" value="2-isopropylmalate synthase"/>
    <property type="match status" value="1"/>
</dbReference>
<dbReference type="FunFam" id="3.20.20.70:FF:000010">
    <property type="entry name" value="2-isopropylmalate synthase"/>
    <property type="match status" value="1"/>
</dbReference>
<dbReference type="Gene3D" id="1.10.238.260">
    <property type="match status" value="1"/>
</dbReference>
<dbReference type="Gene3D" id="3.20.20.70">
    <property type="entry name" value="Aldolase class I"/>
    <property type="match status" value="1"/>
</dbReference>
<dbReference type="InterPro" id="IPR050073">
    <property type="entry name" value="2-IPM_HCS-like"/>
</dbReference>
<dbReference type="InterPro" id="IPR002034">
    <property type="entry name" value="AIPM/Hcit_synth_CS"/>
</dbReference>
<dbReference type="InterPro" id="IPR013785">
    <property type="entry name" value="Aldolase_TIM"/>
</dbReference>
<dbReference type="InterPro" id="IPR054691">
    <property type="entry name" value="LeuA/HCS_post-cat"/>
</dbReference>
<dbReference type="InterPro" id="IPR000891">
    <property type="entry name" value="PYR_CT"/>
</dbReference>
<dbReference type="NCBIfam" id="NF002086">
    <property type="entry name" value="PRK00915.1-3"/>
    <property type="match status" value="1"/>
</dbReference>
<dbReference type="PANTHER" id="PTHR10277">
    <property type="entry name" value="HOMOCITRATE SYNTHASE-RELATED"/>
    <property type="match status" value="1"/>
</dbReference>
<dbReference type="PANTHER" id="PTHR10277:SF60">
    <property type="entry name" value="METHYLTHIOALKYLMALATE SYNTHASE 1, CHLOROPLASTIC-RELATED"/>
    <property type="match status" value="1"/>
</dbReference>
<dbReference type="Pfam" id="PF22617">
    <property type="entry name" value="HCS_D2"/>
    <property type="match status" value="1"/>
</dbReference>
<dbReference type="Pfam" id="PF00682">
    <property type="entry name" value="HMGL-like"/>
    <property type="match status" value="1"/>
</dbReference>
<dbReference type="SUPFAM" id="SSF51569">
    <property type="entry name" value="Aldolase"/>
    <property type="match status" value="1"/>
</dbReference>
<dbReference type="PROSITE" id="PS00815">
    <property type="entry name" value="AIPM_HOMOCIT_SYNTH_1"/>
    <property type="match status" value="1"/>
</dbReference>
<dbReference type="PROSITE" id="PS00816">
    <property type="entry name" value="AIPM_HOMOCIT_SYNTH_2"/>
    <property type="match status" value="1"/>
</dbReference>
<dbReference type="PROSITE" id="PS50991">
    <property type="entry name" value="PYR_CT"/>
    <property type="match status" value="1"/>
</dbReference>
<comment type="function">
    <text evidence="5 6">Determines the side chain length of aliphatic glucosinolate structures. Catalyzes exclusively the condensation reactions of both the first and second methionine carbon chain elongation.</text>
</comment>
<comment type="catalytic activity">
    <reaction evidence="5">
        <text>an omega-(methylsulfanyl)-2-oxoalkanoate + acetyl-CoA + H2O = a 2-(omega-methylsulfanyl)alkylmalate + CoA + H(+)</text>
        <dbReference type="Rhea" id="RHEA:50624"/>
        <dbReference type="Rhea" id="RHEA-COMP:12823"/>
        <dbReference type="Rhea" id="RHEA-COMP:12824"/>
        <dbReference type="ChEBI" id="CHEBI:15377"/>
        <dbReference type="ChEBI" id="CHEBI:15378"/>
        <dbReference type="ChEBI" id="CHEBI:57287"/>
        <dbReference type="ChEBI" id="CHEBI:57288"/>
        <dbReference type="ChEBI" id="CHEBI:133493"/>
        <dbReference type="ChEBI" id="CHEBI:133494"/>
        <dbReference type="EC" id="2.3.3.17"/>
    </reaction>
</comment>
<comment type="cofactor">
    <cofactor>
        <name>Mn(2+)</name>
        <dbReference type="ChEBI" id="CHEBI:29035"/>
    </cofactor>
    <text>Manganese or any other divalent metal ion, except copper or zinc.</text>
</comment>
<comment type="activity regulation">
    <text evidence="5">1 mM DTT required for activity. Activated by ATP and inhibited by iodoacetamide.</text>
</comment>
<comment type="biophysicochemical properties">
    <kinetics>
        <KM evidence="5">3 mM for 4-methylthio-2-oxobutanoic acid</KM>
        <KM evidence="5">11.2 mM for 2-oxohexanoic acid</KM>
        <KM evidence="5">0.64 mM for 5-methylthio-2-oxopentanoic acid</KM>
        <KM evidence="5">7.5 mM for 2-oxoheptanoic acid</KM>
        <KM evidence="5">245 uM for acetyl-CoA</KM>
    </kinetics>
    <phDependence>
        <text evidence="5">Optimum pH is 8.5.</text>
    </phDependence>
    <temperatureDependence>
        <text evidence="5">Optimum temperature is 32 degrees Celsius.</text>
    </temperatureDependence>
</comment>
<comment type="subunit">
    <text evidence="5">Monomer.</text>
</comment>
<comment type="subcellular location">
    <subcellularLocation>
        <location evidence="8">Plastid</location>
        <location evidence="8">Chloroplast</location>
    </subcellularLocation>
</comment>
<comment type="tissue specificity">
    <text evidence="4 7">Highly expressed in leaves, flowers, roots and siliques. Not detected in flowers in PubMed:12432038.</text>
</comment>
<comment type="domain">
    <text>The N-terminal part of the protein controls substrate specificity.</text>
</comment>
<comment type="miscellaneous">
    <text>The 5'-part of the gene encoding this protein is deleted in cv. Bl-0, cv. Di-G, cv. Landsberg erecta and cv. Petergof, while the complete gene is missing in cv. Ka-0, cv. Lip-0, cv. No-0, cv. Sei-0, cv. Tsu-1 and cv. Wl-0.</text>
</comment>
<comment type="similarity">
    <text evidence="8">Belongs to the alpha-IPM synthase/homocitrate synthase family.</text>
</comment>
<evidence type="ECO:0000255" key="1"/>
<evidence type="ECO:0000255" key="2">
    <source>
        <dbReference type="PROSITE-ProRule" id="PRU01151"/>
    </source>
</evidence>
<evidence type="ECO:0000269" key="3">
    <source>
    </source>
</evidence>
<evidence type="ECO:0000269" key="4">
    <source>
    </source>
</evidence>
<evidence type="ECO:0000269" key="5">
    <source>
    </source>
</evidence>
<evidence type="ECO:0000269" key="6">
    <source>
    </source>
</evidence>
<evidence type="ECO:0000269" key="7">
    <source>
    </source>
</evidence>
<evidence type="ECO:0000305" key="8"/>
<evidence type="ECO:0007744" key="9">
    <source>
    </source>
</evidence>
<reference key="1">
    <citation type="journal article" date="2001" name="Plant Physiol.">
        <title>A gene controlling variation in Arabidopsis glucosinolate composition is part of the methionine chain elongation pathway.</title>
        <authorList>
            <person name="Kroymann J."/>
            <person name="Textor S."/>
            <person name="Tokuhisa J.G."/>
            <person name="Falk K.L."/>
            <person name="Bartram S."/>
            <person name="Gershenzon J."/>
            <person name="Mitchell-Olds T."/>
        </authorList>
    </citation>
    <scope>NUCLEOTIDE SEQUENCE [GENOMIC DNA]</scope>
    <scope>MUTAGENESIS OF SER-102 AND ALA-290</scope>
    <scope>CHARACTERIZATION</scope>
    <source>
        <strain>cv. Columbia</strain>
    </source>
</reference>
<reference key="2">
    <citation type="journal article" date="2002" name="J. Exp. Bot.">
        <title>Isolation and expression analysis of the isopropylmalate synthase gene family of Arabidopsis thaliana.</title>
        <authorList>
            <person name="Junk D.J."/>
            <person name="Mourad G.S."/>
        </authorList>
    </citation>
    <scope>NUCLEOTIDE SEQUENCE [MRNA]</scope>
    <scope>TISSUE SPECIFICITY</scope>
</reference>
<reference key="3">
    <citation type="journal article" date="2003" name="Proc. Natl. Acad. Sci. U.S.A.">
        <title>Evolutionary dynamics of an Arabidopsis insect resistance quantitative trait locus.</title>
        <authorList>
            <person name="Kroymann J."/>
            <person name="Donnerhacke S."/>
            <person name="Schnabelrauch D."/>
            <person name="Mitchell-Olds T."/>
        </authorList>
    </citation>
    <scope>NUCLEOTIDE SEQUENCE [GENOMIC DNA / MRNA]</scope>
    <scope>VARIANTS</scope>
    <source>
        <strain>cv. Aa-0</strain>
        <strain>cv. Ag-0</strain>
        <strain>cv. Ema-1</strain>
        <strain>cv. Gy-0</strain>
        <strain>cv. Landsberg erecta</strain>
        <strain>cv. Mt-0</strain>
        <strain>cv. Pla-0</strain>
        <strain>cv. Sorbo</strain>
    </source>
</reference>
<reference key="4">
    <citation type="journal article" date="2006" name="Proc. Natl. Acad. Sci. U.S.A.">
        <title>Positive selection driving diversification in plant secondary metabolism.</title>
        <authorList>
            <person name="Benderoth M."/>
            <person name="Textor S."/>
            <person name="Windsor A.J."/>
            <person name="Mitchell-Olds T."/>
            <person name="Gershenzon J."/>
            <person name="Kroymann J."/>
        </authorList>
    </citation>
    <scope>NUCLEOTIDE SEQUENCE [GENOMIC DNA]</scope>
    <scope>FUNCTION</scope>
    <source>
        <strain>cv. Sorbo</strain>
    </source>
</reference>
<reference key="5">
    <citation type="submission" date="1999-04" db="EMBL/GenBank/DDBJ databases">
        <title>Structural analysis of Arabidopsis thaliana chromosome 5. XI.</title>
        <authorList>
            <person name="Kaneko T."/>
            <person name="Katoh T."/>
            <person name="Asamizu E."/>
            <person name="Sato S."/>
            <person name="Nakamura Y."/>
            <person name="Kotani H."/>
            <person name="Tabata S."/>
        </authorList>
    </citation>
    <scope>NUCLEOTIDE SEQUENCE [LARGE SCALE GENOMIC DNA]</scope>
    <source>
        <strain>cv. Columbia</strain>
    </source>
</reference>
<reference key="6">
    <citation type="journal article" date="2017" name="Plant J.">
        <title>Araport11: a complete reannotation of the Arabidopsis thaliana reference genome.</title>
        <authorList>
            <person name="Cheng C.Y."/>
            <person name="Krishnakumar V."/>
            <person name="Chan A.P."/>
            <person name="Thibaud-Nissen F."/>
            <person name="Schobel S."/>
            <person name="Town C.D."/>
        </authorList>
    </citation>
    <scope>GENOME REANNOTATION</scope>
    <source>
        <strain>cv. Columbia</strain>
    </source>
</reference>
<reference key="7">
    <citation type="journal article" date="2003" name="Science">
        <title>Empirical analysis of transcriptional activity in the Arabidopsis genome.</title>
        <authorList>
            <person name="Yamada K."/>
            <person name="Lim J."/>
            <person name="Dale J.M."/>
            <person name="Chen H."/>
            <person name="Shinn P."/>
            <person name="Palm C.J."/>
            <person name="Southwick A.M."/>
            <person name="Wu H.C."/>
            <person name="Kim C.J."/>
            <person name="Nguyen M."/>
            <person name="Pham P.K."/>
            <person name="Cheuk R.F."/>
            <person name="Karlin-Newmann G."/>
            <person name="Liu S.X."/>
            <person name="Lam B."/>
            <person name="Sakano H."/>
            <person name="Wu T."/>
            <person name="Yu G."/>
            <person name="Miranda M."/>
            <person name="Quach H.L."/>
            <person name="Tripp M."/>
            <person name="Chang C.H."/>
            <person name="Lee J.M."/>
            <person name="Toriumi M.J."/>
            <person name="Chan M.M."/>
            <person name="Tang C.C."/>
            <person name="Onodera C.S."/>
            <person name="Deng J.M."/>
            <person name="Akiyama K."/>
            <person name="Ansari Y."/>
            <person name="Arakawa T."/>
            <person name="Banh J."/>
            <person name="Banno F."/>
            <person name="Bowser L."/>
            <person name="Brooks S.Y."/>
            <person name="Carninci P."/>
            <person name="Chao Q."/>
            <person name="Choy N."/>
            <person name="Enju A."/>
            <person name="Goldsmith A.D."/>
            <person name="Gurjal M."/>
            <person name="Hansen N.F."/>
            <person name="Hayashizaki Y."/>
            <person name="Johnson-Hopson C."/>
            <person name="Hsuan V.W."/>
            <person name="Iida K."/>
            <person name="Karnes M."/>
            <person name="Khan S."/>
            <person name="Koesema E."/>
            <person name="Ishida J."/>
            <person name="Jiang P.X."/>
            <person name="Jones T."/>
            <person name="Kawai J."/>
            <person name="Kamiya A."/>
            <person name="Meyers C."/>
            <person name="Nakajima M."/>
            <person name="Narusaka M."/>
            <person name="Seki M."/>
            <person name="Sakurai T."/>
            <person name="Satou M."/>
            <person name="Tamse R."/>
            <person name="Vaysberg M."/>
            <person name="Wallender E.K."/>
            <person name="Wong C."/>
            <person name="Yamamura Y."/>
            <person name="Yuan S."/>
            <person name="Shinozaki K."/>
            <person name="Davis R.W."/>
            <person name="Theologis A."/>
            <person name="Ecker J.R."/>
        </authorList>
    </citation>
    <scope>NUCLEOTIDE SEQUENCE [LARGE SCALE MRNA]</scope>
    <source>
        <strain>cv. Columbia</strain>
    </source>
</reference>
<reference key="8">
    <citation type="journal article" date="2000" name="Theor. Appl. Genet.">
        <title>Alpha-keto acid elongation and glucosinolate biosynthesis in Arabidopsis thaliana.</title>
        <authorList>
            <person name="Campos de Quiros H."/>
            <person name="Magrath R."/>
            <person name="McCallum D."/>
            <person name="Kroymann J."/>
            <person name="Scnabelrauch D."/>
            <person name="Mitchell-Olds T."/>
            <person name="Mithen R."/>
        </authorList>
        <dbReference type="AGRICOLA" id="IND22089415"/>
    </citation>
    <scope>IDENTIFICATION</scope>
</reference>
<reference key="9">
    <citation type="journal article" date="2004" name="Planta">
        <title>Biosynthesis of methionine-derived glucosinolates in Arabidopsis thaliana: recombinant expression and characterization of methylthioalkylmalate synthase, the condensing enzyme of the chain-elongation cycle.</title>
        <authorList>
            <person name="Textor S."/>
            <person name="Bartram S."/>
            <person name="Kroymann J."/>
            <person name="Falk K.L."/>
            <person name="Hick A."/>
            <person name="Pickett J.A."/>
            <person name="Gershenzon J."/>
        </authorList>
    </citation>
    <scope>FUNCTION</scope>
    <scope>CATALYTIC ACTIVITY</scope>
    <scope>BIOPHYSICOCHEMICAL PROPERTIES</scope>
    <scope>ACTIVITY REGULATION</scope>
    <scope>SUBUNIT</scope>
    <source>
        <strain>cv. Columbia</strain>
    </source>
</reference>
<reference key="10">
    <citation type="journal article" date="2007" name="Plant Physiol.">
        <title>MAM3 catalyzes the formation of all aliphatic glucosinolate chain lengths in Arabidopsis.</title>
        <authorList>
            <person name="Textor S."/>
            <person name="de Kraker J.-W."/>
            <person name="Hause B."/>
            <person name="Gershenzon J."/>
            <person name="Tokuhisa J.G."/>
        </authorList>
    </citation>
    <scope>NOMENCLATURE</scope>
    <scope>TISSUE SPECIFICITY</scope>
</reference>
<reference key="11">
    <citation type="journal article" date="2009" name="Plant Physiol.">
        <title>Large-scale Arabidopsis phosphoproteome profiling reveals novel chloroplast kinase substrates and phosphorylation networks.</title>
        <authorList>
            <person name="Reiland S."/>
            <person name="Messerli G."/>
            <person name="Baerenfaller K."/>
            <person name="Gerrits B."/>
            <person name="Endler A."/>
            <person name="Grossmann J."/>
            <person name="Gruissem W."/>
            <person name="Baginsky S."/>
        </authorList>
    </citation>
    <scope>PHOSPHORYLATION [LARGE SCALE ANALYSIS] AT SER-98</scope>
    <scope>IDENTIFICATION BY MASS SPECTROMETRY [LARGE SCALE ANALYSIS]</scope>
</reference>
<feature type="transit peptide" description="Chloroplast" evidence="1">
    <location>
        <begin position="1"/>
        <end position="49"/>
    </location>
</feature>
<feature type="chain" id="PRO_0000315841" description="Methylthioalkylmalate synthase 1, chloroplastic">
    <location>
        <begin position="50"/>
        <end position="506"/>
    </location>
</feature>
<feature type="domain" description="Pyruvate carboxyltransferase" evidence="2">
    <location>
        <begin position="85"/>
        <end position="359"/>
    </location>
</feature>
<feature type="modified residue" description="Phosphoserine" evidence="9">
    <location>
        <position position="98"/>
    </location>
</feature>
<feature type="sequence variant" description="In strain: cv. Sorbo.">
    <original>V</original>
    <variation>G</variation>
    <location>
        <position position="10"/>
    </location>
</feature>
<feature type="sequence variant" description="In strain: cv. Ema-1 and cv. Pla-0.">
    <original>N</original>
    <variation>K</variation>
    <location>
        <position position="42"/>
    </location>
</feature>
<feature type="sequence variant" description="In strain: cv. Sorbo.">
    <original>A</original>
    <variation>T</variation>
    <location>
        <position position="44"/>
    </location>
</feature>
<feature type="sequence variant" description="In strain: cv. Sorbo.">
    <original>N</original>
    <variation>T</variation>
    <location>
        <position position="505"/>
    </location>
</feature>
<feature type="mutagenesis site" description="In gsm1-1; loss of conversion of C3 to C4 glucosinolates." evidence="3">
    <original>S</original>
    <variation>F</variation>
    <location>
        <position position="102"/>
    </location>
</feature>
<feature type="mutagenesis site" description="In gsm1-2; loss of conversion of C3 to C4 glucosinolates." evidence="3">
    <original>A</original>
    <variation>T</variation>
    <location>
        <position position="290"/>
    </location>
</feature>
<gene>
    <name type="primary">MAM1</name>
    <name type="synonym">IMS3</name>
    <name type="synonym">IPMS_AT2</name>
    <name type="synonym">MAM-L</name>
    <name type="synonym">MAML</name>
    <name type="ordered locus">At5g23010</name>
    <name type="ORF">T20O7.3</name>
</gene>
<proteinExistence type="evidence at protein level"/>
<organism>
    <name type="scientific">Arabidopsis thaliana</name>
    <name type="common">Mouse-ear cress</name>
    <dbReference type="NCBI Taxonomy" id="3702"/>
    <lineage>
        <taxon>Eukaryota</taxon>
        <taxon>Viridiplantae</taxon>
        <taxon>Streptophyta</taxon>
        <taxon>Embryophyta</taxon>
        <taxon>Tracheophyta</taxon>
        <taxon>Spermatophyta</taxon>
        <taxon>Magnoliopsida</taxon>
        <taxon>eudicotyledons</taxon>
        <taxon>Gunneridae</taxon>
        <taxon>Pentapetalae</taxon>
        <taxon>rosids</taxon>
        <taxon>malvids</taxon>
        <taxon>Brassicales</taxon>
        <taxon>Brassicaceae</taxon>
        <taxon>Camelineae</taxon>
        <taxon>Arabidopsis</taxon>
    </lineage>
</organism>
<sequence>MASSLLTSSVMIPTTGSTVVGRSVLPFQSSLHSLRLTHSYKNPALFISCCSSVSKNAATSSTDLKPVVERWPEYIPNKLPDGNYVRVFDTTLRDGEQSPGGSLTPPQKLEIARQLAKLRVDIMEVGFPGSSEEELETIKTIAKTVGNEVDEETGYVPVICAIARCKHRDIEATWEALKYAKRPRILVFTSTSDIHMKYKLKKTQEEVIEMAVSSIRFAKSLGFNDIQFGCEDGGRSDKDFLCKILGEAIKAGVTVVTIGDTVGINMPHEYGELVTYLKANTPGIDDVVVAVHCHNDLGLATANSIAGIRAGARQVEVTINGIGERSGNASLEEVVMALKCRGAYVINGVYTKIDTRQIMATSKMVQEYTGLYVQAHKPIVGANCFVHESGIHQDGILKNRSTYEILSPEDIGIVKSQNSGLVLGKLSGRHAVKDRLKELGYELDDEKLNAVFSLFRDLTKNKKRITDADLKALVTSSDEISLEKLNGANGLKSNGYIPVPQVSSNV</sequence>
<name>MAM1_ARATH</name>
<protein>
    <recommendedName>
        <fullName>Methylthioalkylmalate synthase 1, chloroplastic</fullName>
        <ecNumber evidence="5">2.3.3.17</ecNumber>
    </recommendedName>
    <alternativeName>
        <fullName>2-isopropylmalate synthase 3</fullName>
    </alternativeName>
</protein>
<keyword id="KW-0150">Chloroplast</keyword>
<keyword id="KW-0597">Phosphoprotein</keyword>
<keyword id="KW-0934">Plastid</keyword>
<keyword id="KW-1185">Reference proteome</keyword>
<keyword id="KW-0808">Transferase</keyword>
<keyword id="KW-0809">Transit peptide</keyword>
<accession>Q9FG67</accession>
<accession>Q70YX4</accession>
<accession>Q70YX9</accession>